<protein>
    <recommendedName>
        <fullName evidence="1">Histidinol-phosphate aminotransferase</fullName>
        <ecNumber evidence="1">2.6.1.9</ecNumber>
    </recommendedName>
    <alternativeName>
        <fullName evidence="1">Imidazole acetol-phosphate transaminase</fullName>
    </alternativeName>
</protein>
<accession>Q5F7D7</accession>
<organism>
    <name type="scientific">Neisseria gonorrhoeae (strain ATCC 700825 / FA 1090)</name>
    <dbReference type="NCBI Taxonomy" id="242231"/>
    <lineage>
        <taxon>Bacteria</taxon>
        <taxon>Pseudomonadati</taxon>
        <taxon>Pseudomonadota</taxon>
        <taxon>Betaproteobacteria</taxon>
        <taxon>Neisseriales</taxon>
        <taxon>Neisseriaceae</taxon>
        <taxon>Neisseria</taxon>
    </lineage>
</organism>
<feature type="chain" id="PRO_0000153398" description="Histidinol-phosphate aminotransferase">
    <location>
        <begin position="1"/>
        <end position="359"/>
    </location>
</feature>
<feature type="modified residue" description="N6-(pyridoxal phosphate)lysine" evidence="1">
    <location>
        <position position="220"/>
    </location>
</feature>
<dbReference type="EC" id="2.6.1.9" evidence="1"/>
<dbReference type="EMBL" id="AE004969">
    <property type="protein sequence ID" value="AAW89900.1"/>
    <property type="molecule type" value="Genomic_DNA"/>
</dbReference>
<dbReference type="RefSeq" id="WP_003689699.1">
    <property type="nucleotide sequence ID" value="NC_002946.2"/>
</dbReference>
<dbReference type="RefSeq" id="YP_208312.1">
    <property type="nucleotide sequence ID" value="NC_002946.2"/>
</dbReference>
<dbReference type="SMR" id="Q5F7D7"/>
<dbReference type="STRING" id="242231.NGO_1241"/>
<dbReference type="GeneID" id="66752478"/>
<dbReference type="KEGG" id="ngo:NGO_1241"/>
<dbReference type="PATRIC" id="fig|242231.10.peg.1460"/>
<dbReference type="HOGENOM" id="CLU_017584_3_1_4"/>
<dbReference type="UniPathway" id="UPA00031">
    <property type="reaction ID" value="UER00012"/>
</dbReference>
<dbReference type="Proteomes" id="UP000000535">
    <property type="component" value="Chromosome"/>
</dbReference>
<dbReference type="GO" id="GO:0004400">
    <property type="term" value="F:histidinol-phosphate transaminase activity"/>
    <property type="evidence" value="ECO:0007669"/>
    <property type="project" value="UniProtKB-UniRule"/>
</dbReference>
<dbReference type="GO" id="GO:0030170">
    <property type="term" value="F:pyridoxal phosphate binding"/>
    <property type="evidence" value="ECO:0007669"/>
    <property type="project" value="InterPro"/>
</dbReference>
<dbReference type="GO" id="GO:0000105">
    <property type="term" value="P:L-histidine biosynthetic process"/>
    <property type="evidence" value="ECO:0007669"/>
    <property type="project" value="UniProtKB-UniRule"/>
</dbReference>
<dbReference type="CDD" id="cd00609">
    <property type="entry name" value="AAT_like"/>
    <property type="match status" value="1"/>
</dbReference>
<dbReference type="Gene3D" id="3.90.1150.10">
    <property type="entry name" value="Aspartate Aminotransferase, domain 1"/>
    <property type="match status" value="1"/>
</dbReference>
<dbReference type="Gene3D" id="3.40.640.10">
    <property type="entry name" value="Type I PLP-dependent aspartate aminotransferase-like (Major domain)"/>
    <property type="match status" value="1"/>
</dbReference>
<dbReference type="HAMAP" id="MF_01023">
    <property type="entry name" value="HisC_aminotrans_2"/>
    <property type="match status" value="1"/>
</dbReference>
<dbReference type="InterPro" id="IPR004839">
    <property type="entry name" value="Aminotransferase_I/II_large"/>
</dbReference>
<dbReference type="InterPro" id="IPR005861">
    <property type="entry name" value="HisP_aminotrans"/>
</dbReference>
<dbReference type="InterPro" id="IPR015424">
    <property type="entry name" value="PyrdxlP-dep_Trfase"/>
</dbReference>
<dbReference type="InterPro" id="IPR015421">
    <property type="entry name" value="PyrdxlP-dep_Trfase_major"/>
</dbReference>
<dbReference type="InterPro" id="IPR015422">
    <property type="entry name" value="PyrdxlP-dep_Trfase_small"/>
</dbReference>
<dbReference type="NCBIfam" id="TIGR01141">
    <property type="entry name" value="hisC"/>
    <property type="match status" value="1"/>
</dbReference>
<dbReference type="PANTHER" id="PTHR42885:SF2">
    <property type="entry name" value="HISTIDINOL-PHOSPHATE AMINOTRANSFERASE"/>
    <property type="match status" value="1"/>
</dbReference>
<dbReference type="PANTHER" id="PTHR42885">
    <property type="entry name" value="HISTIDINOL-PHOSPHATE AMINOTRANSFERASE-RELATED"/>
    <property type="match status" value="1"/>
</dbReference>
<dbReference type="Pfam" id="PF00155">
    <property type="entry name" value="Aminotran_1_2"/>
    <property type="match status" value="1"/>
</dbReference>
<dbReference type="SUPFAM" id="SSF53383">
    <property type="entry name" value="PLP-dependent transferases"/>
    <property type="match status" value="1"/>
</dbReference>
<name>HIS8_NEIG1</name>
<reference key="1">
    <citation type="submission" date="2003-03" db="EMBL/GenBank/DDBJ databases">
        <title>The complete genome sequence of Neisseria gonorrhoeae.</title>
        <authorList>
            <person name="Lewis L.A."/>
            <person name="Gillaspy A.F."/>
            <person name="McLaughlin R.E."/>
            <person name="Gipson M."/>
            <person name="Ducey T.F."/>
            <person name="Ownbey T."/>
            <person name="Hartman K."/>
            <person name="Nydick C."/>
            <person name="Carson M.B."/>
            <person name="Vaughn J."/>
            <person name="Thomson C."/>
            <person name="Song L."/>
            <person name="Lin S."/>
            <person name="Yuan X."/>
            <person name="Najar F."/>
            <person name="Zhan M."/>
            <person name="Ren Q."/>
            <person name="Zhu H."/>
            <person name="Qi S."/>
            <person name="Kenton S.M."/>
            <person name="Lai H."/>
            <person name="White J.D."/>
            <person name="Clifton S."/>
            <person name="Roe B.A."/>
            <person name="Dyer D.W."/>
        </authorList>
    </citation>
    <scope>NUCLEOTIDE SEQUENCE [LARGE SCALE GENOMIC DNA]</scope>
    <source>
        <strain>ATCC 700825 / FA 1090</strain>
    </source>
</reference>
<sequence>MKSVRSFIRNDILAMSAYKITDVPPGFAKLDAMESPAHPFEGHEALMREWRAQLASAPIHLYPNPSGCGLQEALRSAFDIPDCAAVALGNGSDELIQFITMLTAKPGAAMLAAEPGFIMYRHNAALYGMDYVGVPLNGDFTLNLPAVLEAVRKHRPALTFIAYPNNPTGVCFTRAEIEAAIEASDGIVVVDEAYGAFNGDSFLPQAGRIPNLIVLRTLSKIGFAGLRIGYATGCPEVIGELQKILPPYNMNQLSLTTAKLALQHYGIISANIDSLKNERERMFAELGKICRLNAFPSQANFITIRVPDADLLFDTLKQNRILVKKLHGAHPLLEHCLRITIGSSAQNDAVLDVIRRLYR</sequence>
<gene>
    <name evidence="1" type="primary">hisC</name>
    <name type="ordered locus">NGO_1241</name>
</gene>
<comment type="catalytic activity">
    <reaction evidence="1">
        <text>L-histidinol phosphate + 2-oxoglutarate = 3-(imidazol-4-yl)-2-oxopropyl phosphate + L-glutamate</text>
        <dbReference type="Rhea" id="RHEA:23744"/>
        <dbReference type="ChEBI" id="CHEBI:16810"/>
        <dbReference type="ChEBI" id="CHEBI:29985"/>
        <dbReference type="ChEBI" id="CHEBI:57766"/>
        <dbReference type="ChEBI" id="CHEBI:57980"/>
        <dbReference type="EC" id="2.6.1.9"/>
    </reaction>
</comment>
<comment type="cofactor">
    <cofactor evidence="1">
        <name>pyridoxal 5'-phosphate</name>
        <dbReference type="ChEBI" id="CHEBI:597326"/>
    </cofactor>
</comment>
<comment type="pathway">
    <text evidence="1">Amino-acid biosynthesis; L-histidine biosynthesis; L-histidine from 5-phospho-alpha-D-ribose 1-diphosphate: step 7/9.</text>
</comment>
<comment type="subunit">
    <text evidence="1">Homodimer.</text>
</comment>
<comment type="similarity">
    <text evidence="1">Belongs to the class-II pyridoxal-phosphate-dependent aminotransferase family. Histidinol-phosphate aminotransferase subfamily.</text>
</comment>
<keyword id="KW-0028">Amino-acid biosynthesis</keyword>
<keyword id="KW-0032">Aminotransferase</keyword>
<keyword id="KW-0368">Histidine biosynthesis</keyword>
<keyword id="KW-0663">Pyridoxal phosphate</keyword>
<keyword id="KW-1185">Reference proteome</keyword>
<keyword id="KW-0808">Transferase</keyword>
<proteinExistence type="inferred from homology"/>
<evidence type="ECO:0000255" key="1">
    <source>
        <dbReference type="HAMAP-Rule" id="MF_01023"/>
    </source>
</evidence>